<accession>A5EL70</accession>
<proteinExistence type="inferred from homology"/>
<reference key="1">
    <citation type="journal article" date="2007" name="Science">
        <title>Legumes symbioses: absence of nod genes in photosynthetic bradyrhizobia.</title>
        <authorList>
            <person name="Giraud E."/>
            <person name="Moulin L."/>
            <person name="Vallenet D."/>
            <person name="Barbe V."/>
            <person name="Cytryn E."/>
            <person name="Avarre J.-C."/>
            <person name="Jaubert M."/>
            <person name="Simon D."/>
            <person name="Cartieaux F."/>
            <person name="Prin Y."/>
            <person name="Bena G."/>
            <person name="Hannibal L."/>
            <person name="Fardoux J."/>
            <person name="Kojadinovic M."/>
            <person name="Vuillet L."/>
            <person name="Lajus A."/>
            <person name="Cruveiller S."/>
            <person name="Rouy Z."/>
            <person name="Mangenot S."/>
            <person name="Segurens B."/>
            <person name="Dossat C."/>
            <person name="Franck W.L."/>
            <person name="Chang W.-S."/>
            <person name="Saunders E."/>
            <person name="Bruce D."/>
            <person name="Richardson P."/>
            <person name="Normand P."/>
            <person name="Dreyfus B."/>
            <person name="Pignol D."/>
            <person name="Stacey G."/>
            <person name="Emerich D."/>
            <person name="Vermeglio A."/>
            <person name="Medigue C."/>
            <person name="Sadowsky M."/>
        </authorList>
    </citation>
    <scope>NUCLEOTIDE SEQUENCE [LARGE SCALE GENOMIC DNA]</scope>
    <source>
        <strain>BTAi1 / ATCC BAA-1182</strain>
    </source>
</reference>
<protein>
    <recommendedName>
        <fullName evidence="1">Octanoyltransferase</fullName>
        <ecNumber evidence="1">2.3.1.181</ecNumber>
    </recommendedName>
    <alternativeName>
        <fullName evidence="1">Lipoate-protein ligase B</fullName>
    </alternativeName>
    <alternativeName>
        <fullName evidence="1">Lipoyl/octanoyl transferase</fullName>
    </alternativeName>
    <alternativeName>
        <fullName evidence="1">Octanoyl-[acyl-carrier-protein]-protein N-octanoyltransferase</fullName>
    </alternativeName>
</protein>
<keyword id="KW-0012">Acyltransferase</keyword>
<keyword id="KW-0963">Cytoplasm</keyword>
<keyword id="KW-1185">Reference proteome</keyword>
<keyword id="KW-0808">Transferase</keyword>
<gene>
    <name evidence="1" type="primary">lipB</name>
    <name type="ordered locus">BBta_4892</name>
</gene>
<feature type="chain" id="PRO_1000001089" description="Octanoyltransferase">
    <location>
        <begin position="1"/>
        <end position="240"/>
    </location>
</feature>
<feature type="domain" description="BPL/LPL catalytic" evidence="2">
    <location>
        <begin position="49"/>
        <end position="233"/>
    </location>
</feature>
<feature type="active site" description="Acyl-thioester intermediate" evidence="1">
    <location>
        <position position="193"/>
    </location>
</feature>
<feature type="binding site" evidence="1">
    <location>
        <begin position="87"/>
        <end position="94"/>
    </location>
    <ligand>
        <name>substrate</name>
    </ligand>
</feature>
<feature type="binding site" evidence="1">
    <location>
        <begin position="162"/>
        <end position="164"/>
    </location>
    <ligand>
        <name>substrate</name>
    </ligand>
</feature>
<feature type="binding site" evidence="1">
    <location>
        <begin position="175"/>
        <end position="177"/>
    </location>
    <ligand>
        <name>substrate</name>
    </ligand>
</feature>
<feature type="site" description="Lowers pKa of active site Cys" evidence="1">
    <location>
        <position position="159"/>
    </location>
</feature>
<comment type="function">
    <text evidence="1">Catalyzes the transfer of endogenously produced octanoic acid from octanoyl-acyl-carrier-protein onto the lipoyl domains of lipoate-dependent enzymes. Lipoyl-ACP can also act as a substrate although octanoyl-ACP is likely to be the physiological substrate.</text>
</comment>
<comment type="catalytic activity">
    <reaction evidence="1">
        <text>octanoyl-[ACP] + L-lysyl-[protein] = N(6)-octanoyl-L-lysyl-[protein] + holo-[ACP] + H(+)</text>
        <dbReference type="Rhea" id="RHEA:17665"/>
        <dbReference type="Rhea" id="RHEA-COMP:9636"/>
        <dbReference type="Rhea" id="RHEA-COMP:9685"/>
        <dbReference type="Rhea" id="RHEA-COMP:9752"/>
        <dbReference type="Rhea" id="RHEA-COMP:9928"/>
        <dbReference type="ChEBI" id="CHEBI:15378"/>
        <dbReference type="ChEBI" id="CHEBI:29969"/>
        <dbReference type="ChEBI" id="CHEBI:64479"/>
        <dbReference type="ChEBI" id="CHEBI:78463"/>
        <dbReference type="ChEBI" id="CHEBI:78809"/>
        <dbReference type="EC" id="2.3.1.181"/>
    </reaction>
</comment>
<comment type="pathway">
    <text evidence="1">Protein modification; protein lipoylation via endogenous pathway; protein N(6)-(lipoyl)lysine from octanoyl-[acyl-carrier-protein]: step 1/2.</text>
</comment>
<comment type="subcellular location">
    <subcellularLocation>
        <location evidence="1">Cytoplasm</location>
    </subcellularLocation>
</comment>
<comment type="miscellaneous">
    <text evidence="1">In the reaction, the free carboxyl group of octanoic acid is attached via an amide linkage to the epsilon-amino group of a specific lysine residue of lipoyl domains of lipoate-dependent enzymes.</text>
</comment>
<comment type="similarity">
    <text evidence="1">Belongs to the LipB family.</text>
</comment>
<name>LIPB_BRASB</name>
<sequence length="240" mass="26397">MVNSRETLDLTTFVGPAGNAVDWRISDSRVDYAAALAFMEARAAAIAAGEAPELVWLLEHPPVYTSGTSGKPEDLRDPRFPLVPTGRGGQVTYHGPGQRVAYVMLDLKRRRPDVRAYVAALEEMIIRTLDAFNVRGERREDRVGVWVRRPDKGEGYEDKIAAIGVRLKRWVSFHGIAINVEPDLTHFQAIVPCGVTDPRYGVTSLVDLGLPVTLTDVDLALRQAFESVFGATRASLPETA</sequence>
<organism>
    <name type="scientific">Bradyrhizobium sp. (strain BTAi1 / ATCC BAA-1182)</name>
    <dbReference type="NCBI Taxonomy" id="288000"/>
    <lineage>
        <taxon>Bacteria</taxon>
        <taxon>Pseudomonadati</taxon>
        <taxon>Pseudomonadota</taxon>
        <taxon>Alphaproteobacteria</taxon>
        <taxon>Hyphomicrobiales</taxon>
        <taxon>Nitrobacteraceae</taxon>
        <taxon>Bradyrhizobium</taxon>
    </lineage>
</organism>
<dbReference type="EC" id="2.3.1.181" evidence="1"/>
<dbReference type="EMBL" id="CP000494">
    <property type="protein sequence ID" value="ABQ36914.1"/>
    <property type="molecule type" value="Genomic_DNA"/>
</dbReference>
<dbReference type="RefSeq" id="WP_012044897.1">
    <property type="nucleotide sequence ID" value="NC_009485.1"/>
</dbReference>
<dbReference type="SMR" id="A5EL70"/>
<dbReference type="STRING" id="288000.BBta_4892"/>
<dbReference type="KEGG" id="bbt:BBta_4892"/>
<dbReference type="eggNOG" id="COG0321">
    <property type="taxonomic scope" value="Bacteria"/>
</dbReference>
<dbReference type="HOGENOM" id="CLU_035168_3_0_5"/>
<dbReference type="OrthoDB" id="9787061at2"/>
<dbReference type="UniPathway" id="UPA00538">
    <property type="reaction ID" value="UER00592"/>
</dbReference>
<dbReference type="Proteomes" id="UP000000246">
    <property type="component" value="Chromosome"/>
</dbReference>
<dbReference type="GO" id="GO:0005737">
    <property type="term" value="C:cytoplasm"/>
    <property type="evidence" value="ECO:0007669"/>
    <property type="project" value="UniProtKB-SubCell"/>
</dbReference>
<dbReference type="GO" id="GO:0033819">
    <property type="term" value="F:lipoyl(octanoyl) transferase activity"/>
    <property type="evidence" value="ECO:0007669"/>
    <property type="project" value="UniProtKB-EC"/>
</dbReference>
<dbReference type="GO" id="GO:0036211">
    <property type="term" value="P:protein modification process"/>
    <property type="evidence" value="ECO:0007669"/>
    <property type="project" value="InterPro"/>
</dbReference>
<dbReference type="CDD" id="cd16444">
    <property type="entry name" value="LipB"/>
    <property type="match status" value="1"/>
</dbReference>
<dbReference type="FunFam" id="3.30.930.10:FF:000159">
    <property type="entry name" value="Octanoyltransferase"/>
    <property type="match status" value="1"/>
</dbReference>
<dbReference type="Gene3D" id="3.30.930.10">
    <property type="entry name" value="Bira Bifunctional Protein, Domain 2"/>
    <property type="match status" value="1"/>
</dbReference>
<dbReference type="HAMAP" id="MF_00013">
    <property type="entry name" value="LipB"/>
    <property type="match status" value="1"/>
</dbReference>
<dbReference type="InterPro" id="IPR045864">
    <property type="entry name" value="aa-tRNA-synth_II/BPL/LPL"/>
</dbReference>
<dbReference type="InterPro" id="IPR004143">
    <property type="entry name" value="BPL_LPL_catalytic"/>
</dbReference>
<dbReference type="InterPro" id="IPR000544">
    <property type="entry name" value="Octanoyltransferase"/>
</dbReference>
<dbReference type="InterPro" id="IPR020605">
    <property type="entry name" value="Octanoyltransferase_CS"/>
</dbReference>
<dbReference type="NCBIfam" id="TIGR00214">
    <property type="entry name" value="lipB"/>
    <property type="match status" value="1"/>
</dbReference>
<dbReference type="NCBIfam" id="NF010921">
    <property type="entry name" value="PRK14341.1"/>
    <property type="match status" value="1"/>
</dbReference>
<dbReference type="NCBIfam" id="NF010925">
    <property type="entry name" value="PRK14345.1"/>
    <property type="match status" value="1"/>
</dbReference>
<dbReference type="PANTHER" id="PTHR10993:SF7">
    <property type="entry name" value="LIPOYLTRANSFERASE 2, MITOCHONDRIAL-RELATED"/>
    <property type="match status" value="1"/>
</dbReference>
<dbReference type="PANTHER" id="PTHR10993">
    <property type="entry name" value="OCTANOYLTRANSFERASE"/>
    <property type="match status" value="1"/>
</dbReference>
<dbReference type="Pfam" id="PF21948">
    <property type="entry name" value="LplA-B_cat"/>
    <property type="match status" value="1"/>
</dbReference>
<dbReference type="PIRSF" id="PIRSF016262">
    <property type="entry name" value="LPLase"/>
    <property type="match status" value="1"/>
</dbReference>
<dbReference type="SUPFAM" id="SSF55681">
    <property type="entry name" value="Class II aaRS and biotin synthetases"/>
    <property type="match status" value="1"/>
</dbReference>
<dbReference type="PROSITE" id="PS51733">
    <property type="entry name" value="BPL_LPL_CATALYTIC"/>
    <property type="match status" value="1"/>
</dbReference>
<dbReference type="PROSITE" id="PS01313">
    <property type="entry name" value="LIPB"/>
    <property type="match status" value="1"/>
</dbReference>
<evidence type="ECO:0000255" key="1">
    <source>
        <dbReference type="HAMAP-Rule" id="MF_00013"/>
    </source>
</evidence>
<evidence type="ECO:0000255" key="2">
    <source>
        <dbReference type="PROSITE-ProRule" id="PRU01067"/>
    </source>
</evidence>